<protein>
    <recommendedName>
        <fullName>Phosphatidylinositol 3,4,5-trisphosphate 3-phosphatase TPTE2</fullName>
        <ecNumber evidence="1">3.1.3.67</ecNumber>
    </recommendedName>
</protein>
<keyword id="KW-0256">Endoplasmic reticulum</keyword>
<keyword id="KW-0333">Golgi apparatus</keyword>
<keyword id="KW-0378">Hydrolase</keyword>
<keyword id="KW-0443">Lipid metabolism</keyword>
<keyword id="KW-0472">Membrane</keyword>
<keyword id="KW-1185">Reference proteome</keyword>
<keyword id="KW-0812">Transmembrane</keyword>
<keyword id="KW-1133">Transmembrane helix</keyword>
<evidence type="ECO:0000250" key="1">
    <source>
        <dbReference type="UniProtKB" id="Q6XPS3"/>
    </source>
</evidence>
<evidence type="ECO:0000255" key="2"/>
<evidence type="ECO:0000255" key="3">
    <source>
        <dbReference type="PROSITE-ProRule" id="PRU00589"/>
    </source>
</evidence>
<evidence type="ECO:0000255" key="4">
    <source>
        <dbReference type="PROSITE-ProRule" id="PRU00590"/>
    </source>
</evidence>
<name>TPTE2_MACFA</name>
<organism>
    <name type="scientific">Macaca fascicularis</name>
    <name type="common">Crab-eating macaque</name>
    <name type="synonym">Cynomolgus monkey</name>
    <dbReference type="NCBI Taxonomy" id="9541"/>
    <lineage>
        <taxon>Eukaryota</taxon>
        <taxon>Metazoa</taxon>
        <taxon>Chordata</taxon>
        <taxon>Craniata</taxon>
        <taxon>Vertebrata</taxon>
        <taxon>Euteleostomi</taxon>
        <taxon>Mammalia</taxon>
        <taxon>Eutheria</taxon>
        <taxon>Euarchontoglires</taxon>
        <taxon>Primates</taxon>
        <taxon>Haplorrhini</taxon>
        <taxon>Catarrhini</taxon>
        <taxon>Cercopithecidae</taxon>
        <taxon>Cercopithecinae</taxon>
        <taxon>Macaca</taxon>
    </lineage>
</organism>
<proteinExistence type="evidence at transcript level"/>
<gene>
    <name type="primary">TPTE2</name>
    <name type="ORF">QtsA-17567</name>
</gene>
<sequence>MCRVMKASFSRKVKLELCLLSDCALLSSSSAPTNELSGTNLEAHINESPDPNALVGVIIERSPSDSTQTNEFKGATKETLTIETPHSSECKGAGLLSPVSKSMLERLSKFEVEDAENVASYDTKIKKIVRSIVSSFAFGIFGVFLVLLDVTLLLADLIFNDSKLYIPLVYRSISLAIALFFLMDVLLRVFVEGRQHYFSDLLNVLDTAIIVTPLLVDVVYIFFDIKFLRNIPRWIHLVRLLRLIILIRIFHLIHQKRELEKLMRRLVSENKRRYTRDGFDLDLTYVTERIIAMSFPSSGRQSFYRNPIEEVVRFLDKKHPNHYRVYNLCSERAYDPKYFHNRVSRIMIDDHNVPTLHEMVVFTKEVNEWMAQDPANIVAIHCKGGKGRTGTMICAFLIASEIFLTAEESLYYFGERRTDKTNSSKFQGVETPSQNRYVGYFAQVKHLYNWNLPPRRILFIKRFIIYSIRGVGTGGVCDLKVRIVMEKKVVFSSTSLGNCSILHDIETDRVLIDVFSGPPLYDDVKVQFFSSNLPKYYDNCPFFFWFNTSFIQSNRHILHSFRLVFT</sequence>
<accession>Q4R6N0</accession>
<reference key="1">
    <citation type="submission" date="2005-06" db="EMBL/GenBank/DDBJ databases">
        <title>DNA sequences of macaque genes expressed in brain or testis and its evolutionary implications.</title>
        <authorList>
            <consortium name="International consortium for macaque cDNA sequencing and analysis"/>
        </authorList>
    </citation>
    <scope>NUCLEOTIDE SEQUENCE [LARGE SCALE MRNA]</scope>
    <source>
        <tissue>Testis</tissue>
    </source>
</reference>
<feature type="chain" id="PRO_0000224188" description="Phosphatidylinositol 3,4,5-trisphosphate 3-phosphatase TPTE2">
    <location>
        <begin position="1"/>
        <end position="566"/>
    </location>
</feature>
<feature type="transmembrane region" description="Helical" evidence="2">
    <location>
        <begin position="135"/>
        <end position="155"/>
    </location>
</feature>
<feature type="transmembrane region" description="Helical" evidence="2">
    <location>
        <begin position="173"/>
        <end position="193"/>
    </location>
</feature>
<feature type="transmembrane region" description="Helical" evidence="2">
    <location>
        <begin position="208"/>
        <end position="228"/>
    </location>
</feature>
<feature type="transmembrane region" description="Helical" evidence="2">
    <location>
        <begin position="234"/>
        <end position="254"/>
    </location>
</feature>
<feature type="domain" description="Phosphatase tensin-type" evidence="4">
    <location>
        <begin position="272"/>
        <end position="448"/>
    </location>
</feature>
<feature type="domain" description="C2 tensin-type" evidence="3">
    <location>
        <begin position="455"/>
        <end position="566"/>
    </location>
</feature>
<feature type="active site" description="Phosphocysteine intermediate" evidence="4">
    <location>
        <position position="382"/>
    </location>
</feature>
<dbReference type="EC" id="3.1.3.67" evidence="1"/>
<dbReference type="EMBL" id="AB169152">
    <property type="protein sequence ID" value="BAE01245.1"/>
    <property type="molecule type" value="mRNA"/>
</dbReference>
<dbReference type="SMR" id="Q4R6N0"/>
<dbReference type="STRING" id="9541.ENSMFAP00000023576"/>
<dbReference type="Ensembl" id="ENSMFAT00000031690.2">
    <property type="protein sequence ID" value="ENSMFAP00000023555.2"/>
    <property type="gene ID" value="ENSMFAG00000043402.2"/>
</dbReference>
<dbReference type="GeneTree" id="ENSGT00940000154335"/>
<dbReference type="Proteomes" id="UP000233100">
    <property type="component" value="Chromosome 17"/>
</dbReference>
<dbReference type="Bgee" id="ENSMFAG00000043402">
    <property type="expression patterns" value="Expressed in skeletal muscle tissue and 13 other cell types or tissues"/>
</dbReference>
<dbReference type="GO" id="GO:0005829">
    <property type="term" value="C:cytosol"/>
    <property type="evidence" value="ECO:0007669"/>
    <property type="project" value="TreeGrafter"/>
</dbReference>
<dbReference type="GO" id="GO:0005789">
    <property type="term" value="C:endoplasmic reticulum membrane"/>
    <property type="evidence" value="ECO:0007669"/>
    <property type="project" value="UniProtKB-SubCell"/>
</dbReference>
<dbReference type="GO" id="GO:0000139">
    <property type="term" value="C:Golgi membrane"/>
    <property type="evidence" value="ECO:0007669"/>
    <property type="project" value="UniProtKB-SubCell"/>
</dbReference>
<dbReference type="GO" id="GO:0005216">
    <property type="term" value="F:monoatomic ion channel activity"/>
    <property type="evidence" value="ECO:0007669"/>
    <property type="project" value="InterPro"/>
</dbReference>
<dbReference type="GO" id="GO:0016314">
    <property type="term" value="F:phosphatidylinositol-3,4,5-trisphosphate 3-phosphatase activity"/>
    <property type="evidence" value="ECO:0007669"/>
    <property type="project" value="UniProtKB-EC"/>
</dbReference>
<dbReference type="GO" id="GO:0006629">
    <property type="term" value="P:lipid metabolic process"/>
    <property type="evidence" value="ECO:0007669"/>
    <property type="project" value="UniProtKB-KW"/>
</dbReference>
<dbReference type="CDD" id="cd14510">
    <property type="entry name" value="PTP_VSP_TPTE"/>
    <property type="match status" value="1"/>
</dbReference>
<dbReference type="FunFam" id="3.90.190.10:FF:000053">
    <property type="entry name" value="Phosphatidylinositol 3,4,5-trisphosphate 3-phosphatase TPTE2"/>
    <property type="match status" value="1"/>
</dbReference>
<dbReference type="FunFam" id="1.20.120.350:FF:000067">
    <property type="entry name" value="Transmembrane phosphatase with tensin homology"/>
    <property type="match status" value="1"/>
</dbReference>
<dbReference type="FunFam" id="2.60.40.1110:FF:000004">
    <property type="entry name" value="Voltage-sensor containing phosphatase"/>
    <property type="match status" value="1"/>
</dbReference>
<dbReference type="Gene3D" id="2.60.40.1110">
    <property type="match status" value="1"/>
</dbReference>
<dbReference type="Gene3D" id="3.90.190.10">
    <property type="entry name" value="Protein tyrosine phosphatase superfamily"/>
    <property type="match status" value="1"/>
</dbReference>
<dbReference type="Gene3D" id="1.20.120.350">
    <property type="entry name" value="Voltage-gated potassium channels. Chain C"/>
    <property type="match status" value="1"/>
</dbReference>
<dbReference type="InterPro" id="IPR035892">
    <property type="entry name" value="C2_domain_sf"/>
</dbReference>
<dbReference type="InterPro" id="IPR051281">
    <property type="entry name" value="Dual-spec_lipid-protein_phosph"/>
</dbReference>
<dbReference type="InterPro" id="IPR005821">
    <property type="entry name" value="Ion_trans_dom"/>
</dbReference>
<dbReference type="InterPro" id="IPR029021">
    <property type="entry name" value="Prot-tyrosine_phosphatase-like"/>
</dbReference>
<dbReference type="InterPro" id="IPR045102">
    <property type="entry name" value="PTP_VSP_TPTE"/>
</dbReference>
<dbReference type="InterPro" id="IPR014020">
    <property type="entry name" value="Tensin_C2-dom"/>
</dbReference>
<dbReference type="InterPro" id="IPR029023">
    <property type="entry name" value="Tensin_phosphatase"/>
</dbReference>
<dbReference type="InterPro" id="IPR016130">
    <property type="entry name" value="Tyr_Pase_AS"/>
</dbReference>
<dbReference type="InterPro" id="IPR000387">
    <property type="entry name" value="Tyr_Pase_dom"/>
</dbReference>
<dbReference type="InterPro" id="IPR027359">
    <property type="entry name" value="Volt_channel_dom_sf"/>
</dbReference>
<dbReference type="PANTHER" id="PTHR12305">
    <property type="entry name" value="PHOSPHATASE WITH HOMOLOGY TO TENSIN"/>
    <property type="match status" value="1"/>
</dbReference>
<dbReference type="PANTHER" id="PTHR12305:SF60">
    <property type="entry name" value="PHOSPHATIDYLINOSITOL 3,4,5-TRISPHOSPHATE 3-PHOSPHATASE TPTE2-RELATED"/>
    <property type="match status" value="1"/>
</dbReference>
<dbReference type="Pfam" id="PF00520">
    <property type="entry name" value="Ion_trans"/>
    <property type="match status" value="1"/>
</dbReference>
<dbReference type="Pfam" id="PF10409">
    <property type="entry name" value="PTEN_C2"/>
    <property type="match status" value="1"/>
</dbReference>
<dbReference type="Pfam" id="PF22785">
    <property type="entry name" value="Tc-R-P"/>
    <property type="match status" value="1"/>
</dbReference>
<dbReference type="SMART" id="SM01326">
    <property type="entry name" value="PTEN_C2"/>
    <property type="match status" value="1"/>
</dbReference>
<dbReference type="SUPFAM" id="SSF52799">
    <property type="entry name" value="(Phosphotyrosine protein) phosphatases II"/>
    <property type="match status" value="1"/>
</dbReference>
<dbReference type="SUPFAM" id="SSF49562">
    <property type="entry name" value="C2 domain (Calcium/lipid-binding domain, CaLB)"/>
    <property type="match status" value="1"/>
</dbReference>
<dbReference type="SUPFAM" id="SSF81324">
    <property type="entry name" value="Voltage-gated potassium channels"/>
    <property type="match status" value="1"/>
</dbReference>
<dbReference type="PROSITE" id="PS51182">
    <property type="entry name" value="C2_TENSIN"/>
    <property type="match status" value="1"/>
</dbReference>
<dbReference type="PROSITE" id="PS51181">
    <property type="entry name" value="PPASE_TENSIN"/>
    <property type="match status" value="1"/>
</dbReference>
<comment type="function">
    <text evidence="1">Acts as a lipid phosphatase, removing the phosphate in the D3 position of the inositol ring from phosphatidylinositol 3,4,5-trisphosphate.</text>
</comment>
<comment type="catalytic activity">
    <reaction evidence="1">
        <text>a 1,2-diacyl-sn-glycero-3-phospho-(1D-myo-inositol-3,4,5-trisphosphate) + H2O = a 1,2-diacyl-sn-glycero-3-phospho-(1D-myo-inositol-4,5-bisphosphate) + phosphate</text>
        <dbReference type="Rhea" id="RHEA:25017"/>
        <dbReference type="ChEBI" id="CHEBI:15377"/>
        <dbReference type="ChEBI" id="CHEBI:43474"/>
        <dbReference type="ChEBI" id="CHEBI:57836"/>
        <dbReference type="ChEBI" id="CHEBI:58456"/>
        <dbReference type="EC" id="3.1.3.67"/>
    </reaction>
    <physiologicalReaction direction="left-to-right" evidence="1">
        <dbReference type="Rhea" id="RHEA:25018"/>
    </physiologicalReaction>
</comment>
<comment type="subcellular location">
    <subcellularLocation>
        <location evidence="1">Endoplasmic reticulum membrane</location>
        <topology evidence="2">Multi-pass membrane protein</topology>
    </subcellularLocation>
    <subcellularLocation>
        <location evidence="1">Golgi apparatus membrane</location>
        <topology evidence="2">Multi-pass membrane protein</topology>
    </subcellularLocation>
</comment>